<accession>Q7S949</accession>
<gene>
    <name type="primary">dph-5</name>
    <name type="ORF">NCU07266</name>
</gene>
<name>DPH5_NEUCR</name>
<keyword id="KW-0963">Cytoplasm</keyword>
<keyword id="KW-0489">Methyltransferase</keyword>
<keyword id="KW-1185">Reference proteome</keyword>
<keyword id="KW-0949">S-adenosyl-L-methionine</keyword>
<keyword id="KW-0808">Transferase</keyword>
<reference key="1">
    <citation type="journal article" date="2003" name="Nature">
        <title>The genome sequence of the filamentous fungus Neurospora crassa.</title>
        <authorList>
            <person name="Galagan J.E."/>
            <person name="Calvo S.E."/>
            <person name="Borkovich K.A."/>
            <person name="Selker E.U."/>
            <person name="Read N.D."/>
            <person name="Jaffe D.B."/>
            <person name="FitzHugh W."/>
            <person name="Ma L.-J."/>
            <person name="Smirnov S."/>
            <person name="Purcell S."/>
            <person name="Rehman B."/>
            <person name="Elkins T."/>
            <person name="Engels R."/>
            <person name="Wang S."/>
            <person name="Nielsen C.B."/>
            <person name="Butler J."/>
            <person name="Endrizzi M."/>
            <person name="Qui D."/>
            <person name="Ianakiev P."/>
            <person name="Bell-Pedersen D."/>
            <person name="Nelson M.A."/>
            <person name="Werner-Washburne M."/>
            <person name="Selitrennikoff C.P."/>
            <person name="Kinsey J.A."/>
            <person name="Braun E.L."/>
            <person name="Zelter A."/>
            <person name="Schulte U."/>
            <person name="Kothe G.O."/>
            <person name="Jedd G."/>
            <person name="Mewes H.-W."/>
            <person name="Staben C."/>
            <person name="Marcotte E."/>
            <person name="Greenberg D."/>
            <person name="Roy A."/>
            <person name="Foley K."/>
            <person name="Naylor J."/>
            <person name="Stange-Thomann N."/>
            <person name="Barrett R."/>
            <person name="Gnerre S."/>
            <person name="Kamal M."/>
            <person name="Kamvysselis M."/>
            <person name="Mauceli E.W."/>
            <person name="Bielke C."/>
            <person name="Rudd S."/>
            <person name="Frishman D."/>
            <person name="Krystofova S."/>
            <person name="Rasmussen C."/>
            <person name="Metzenberg R.L."/>
            <person name="Perkins D.D."/>
            <person name="Kroken S."/>
            <person name="Cogoni C."/>
            <person name="Macino G."/>
            <person name="Catcheside D.E.A."/>
            <person name="Li W."/>
            <person name="Pratt R.J."/>
            <person name="Osmani S.A."/>
            <person name="DeSouza C.P.C."/>
            <person name="Glass N.L."/>
            <person name="Orbach M.J."/>
            <person name="Berglund J.A."/>
            <person name="Voelker R."/>
            <person name="Yarden O."/>
            <person name="Plamann M."/>
            <person name="Seiler S."/>
            <person name="Dunlap J.C."/>
            <person name="Radford A."/>
            <person name="Aramayo R."/>
            <person name="Natvig D.O."/>
            <person name="Alex L.A."/>
            <person name="Mannhaupt G."/>
            <person name="Ebbole D.J."/>
            <person name="Freitag M."/>
            <person name="Paulsen I."/>
            <person name="Sachs M.S."/>
            <person name="Lander E.S."/>
            <person name="Nusbaum C."/>
            <person name="Birren B.W."/>
        </authorList>
    </citation>
    <scope>NUCLEOTIDE SEQUENCE [LARGE SCALE GENOMIC DNA]</scope>
    <source>
        <strain>ATCC 24698 / 74-OR23-1A / CBS 708.71 / DSM 1257 / FGSC 987</strain>
    </source>
</reference>
<dbReference type="EC" id="2.1.1.314"/>
<dbReference type="EMBL" id="CM002239">
    <property type="protein sequence ID" value="EAA32884.1"/>
    <property type="molecule type" value="Genomic_DNA"/>
</dbReference>
<dbReference type="RefSeq" id="XP_962120.1">
    <property type="nucleotide sequence ID" value="XM_957027.2"/>
</dbReference>
<dbReference type="SMR" id="Q7S949"/>
<dbReference type="FunCoup" id="Q7S949">
    <property type="interactions" value="915"/>
</dbReference>
<dbReference type="STRING" id="367110.Q7S949"/>
<dbReference type="PaxDb" id="5141-EFNCRP00000007143"/>
<dbReference type="EnsemblFungi" id="EAA32884">
    <property type="protein sequence ID" value="EAA32884"/>
    <property type="gene ID" value="NCU07266"/>
</dbReference>
<dbReference type="GeneID" id="3878259"/>
<dbReference type="KEGG" id="ncr:NCU07266"/>
<dbReference type="VEuPathDB" id="FungiDB:NCU07266"/>
<dbReference type="HOGENOM" id="CLU_066040_1_0_1"/>
<dbReference type="InParanoid" id="Q7S949"/>
<dbReference type="OMA" id="HNASIMS"/>
<dbReference type="OrthoDB" id="2516at2759"/>
<dbReference type="UniPathway" id="UPA00559"/>
<dbReference type="Proteomes" id="UP000001805">
    <property type="component" value="Chromosome 4, Linkage Group IV"/>
</dbReference>
<dbReference type="GO" id="GO:0005737">
    <property type="term" value="C:cytoplasm"/>
    <property type="evidence" value="ECO:0007669"/>
    <property type="project" value="UniProtKB-SubCell"/>
</dbReference>
<dbReference type="GO" id="GO:0141133">
    <property type="term" value="F:diphthine methyl ester synthase activity"/>
    <property type="evidence" value="ECO:0007669"/>
    <property type="project" value="UniProtKB-EC"/>
</dbReference>
<dbReference type="GO" id="GO:0032259">
    <property type="term" value="P:methylation"/>
    <property type="evidence" value="ECO:0007669"/>
    <property type="project" value="UniProtKB-KW"/>
</dbReference>
<dbReference type="GO" id="GO:0017183">
    <property type="term" value="P:protein histidyl modification to diphthamide"/>
    <property type="evidence" value="ECO:0000250"/>
    <property type="project" value="UniProtKB"/>
</dbReference>
<dbReference type="CDD" id="cd11647">
    <property type="entry name" value="DHP5_DphB"/>
    <property type="match status" value="1"/>
</dbReference>
<dbReference type="FunFam" id="3.30.950.10:FF:000004">
    <property type="entry name" value="Diphthine synthase putative"/>
    <property type="match status" value="1"/>
</dbReference>
<dbReference type="FunFam" id="3.40.1010.10:FF:000004">
    <property type="entry name" value="Putative diphthine synthase"/>
    <property type="match status" value="1"/>
</dbReference>
<dbReference type="Gene3D" id="3.40.1010.10">
    <property type="entry name" value="Cobalt-precorrin-4 Transmethylase, Domain 1"/>
    <property type="match status" value="1"/>
</dbReference>
<dbReference type="Gene3D" id="3.30.950.10">
    <property type="entry name" value="Methyltransferase, Cobalt-precorrin-4 Transmethylase, Domain 2"/>
    <property type="match status" value="1"/>
</dbReference>
<dbReference type="HAMAP" id="MF_01084">
    <property type="entry name" value="Diphthine_synth"/>
    <property type="match status" value="1"/>
</dbReference>
<dbReference type="InterPro" id="IPR000878">
    <property type="entry name" value="4pyrrol_Mease"/>
</dbReference>
<dbReference type="InterPro" id="IPR035996">
    <property type="entry name" value="4pyrrol_Methylase_sf"/>
</dbReference>
<dbReference type="InterPro" id="IPR014777">
    <property type="entry name" value="4pyrrole_Mease_sub1"/>
</dbReference>
<dbReference type="InterPro" id="IPR014776">
    <property type="entry name" value="4pyrrole_Mease_sub2"/>
</dbReference>
<dbReference type="InterPro" id="IPR004551">
    <property type="entry name" value="Dphthn_synthase"/>
</dbReference>
<dbReference type="NCBIfam" id="TIGR00522">
    <property type="entry name" value="dph5"/>
    <property type="match status" value="1"/>
</dbReference>
<dbReference type="PANTHER" id="PTHR10882:SF0">
    <property type="entry name" value="DIPHTHINE METHYL ESTER SYNTHASE"/>
    <property type="match status" value="1"/>
</dbReference>
<dbReference type="PANTHER" id="PTHR10882">
    <property type="entry name" value="DIPHTHINE SYNTHASE"/>
    <property type="match status" value="1"/>
</dbReference>
<dbReference type="Pfam" id="PF00590">
    <property type="entry name" value="TP_methylase"/>
    <property type="match status" value="1"/>
</dbReference>
<dbReference type="PIRSF" id="PIRSF036432">
    <property type="entry name" value="Diphthine_synth"/>
    <property type="match status" value="1"/>
</dbReference>
<dbReference type="SUPFAM" id="SSF53790">
    <property type="entry name" value="Tetrapyrrole methylase"/>
    <property type="match status" value="1"/>
</dbReference>
<comment type="function">
    <text evidence="2">S-adenosyl-L-methionine-dependent methyltransferase that catalyzes four methylations of the modified target histidine residue in translation elongation factor 2 (EF-2), to form an intermediate called diphthine methyl ester. The four successive methylation reactions represent the second step of diphthamide biosynthesis.</text>
</comment>
<comment type="catalytic activity">
    <reaction evidence="2">
        <text>2-[(3S)-amino-3-carboxypropyl]-L-histidyl-[translation elongation factor 2] + 4 S-adenosyl-L-methionine = diphthine methyl ester-[translation elongation factor 2] + 4 S-adenosyl-L-homocysteine + 3 H(+)</text>
        <dbReference type="Rhea" id="RHEA:42652"/>
        <dbReference type="Rhea" id="RHEA-COMP:9749"/>
        <dbReference type="Rhea" id="RHEA-COMP:10173"/>
        <dbReference type="ChEBI" id="CHEBI:15378"/>
        <dbReference type="ChEBI" id="CHEBI:57856"/>
        <dbReference type="ChEBI" id="CHEBI:59789"/>
        <dbReference type="ChEBI" id="CHEBI:73995"/>
        <dbReference type="ChEBI" id="CHEBI:79005"/>
        <dbReference type="EC" id="2.1.1.314"/>
    </reaction>
</comment>
<comment type="pathway">
    <text>Protein modification; peptidyl-diphthamide biosynthesis.</text>
</comment>
<comment type="subcellular location">
    <subcellularLocation>
        <location evidence="1">Cytoplasm</location>
    </subcellularLocation>
</comment>
<comment type="similarity">
    <text evidence="3">Belongs to the diphthine synthase family.</text>
</comment>
<evidence type="ECO:0000250" key="1"/>
<evidence type="ECO:0000250" key="2">
    <source>
        <dbReference type="UniProtKB" id="P32469"/>
    </source>
</evidence>
<evidence type="ECO:0000305" key="3"/>
<sequence>MLYLVGLGLSDETDITVKGLEVVKKAERVYLEAYTSILLVDQATLESYYGRPIVVADREMVESNSDEILRDADKVDVAFCVVGDPFGATTHTDLVLRARELGIQVRTVPNASIMSGIGAAGLQLYNFGQTVSMVFFLDNWRPASFYDRIKENRSIGLHTLVLLDIKVKEQSLENMARGRKIYEPPRYMTVGTCAQQMLEIEEEKQEGVYGPESLAIGCARVGGKTEKFVSGTLKELCDADDLLGPPLHSLILLGRRTHELEHDFVREFAVNKENWDRIWKAEYCGKQ</sequence>
<feature type="chain" id="PRO_0000156144" description="Diphthine methyl ester synthase">
    <location>
        <begin position="1"/>
        <end position="287"/>
    </location>
</feature>
<feature type="binding site" evidence="1">
    <location>
        <position position="9"/>
    </location>
    <ligand>
        <name>S-adenosyl-L-methionine</name>
        <dbReference type="ChEBI" id="CHEBI:59789"/>
    </ligand>
</feature>
<feature type="binding site" evidence="1">
    <location>
        <position position="84"/>
    </location>
    <ligand>
        <name>S-adenosyl-L-methionine</name>
        <dbReference type="ChEBI" id="CHEBI:59789"/>
    </ligand>
</feature>
<feature type="binding site" evidence="1">
    <location>
        <position position="87"/>
    </location>
    <ligand>
        <name>S-adenosyl-L-methionine</name>
        <dbReference type="ChEBI" id="CHEBI:59789"/>
    </ligand>
</feature>
<feature type="binding site" evidence="1">
    <location>
        <begin position="112"/>
        <end position="113"/>
    </location>
    <ligand>
        <name>S-adenosyl-L-methionine</name>
        <dbReference type="ChEBI" id="CHEBI:59789"/>
    </ligand>
</feature>
<feature type="binding site" evidence="1">
    <location>
        <position position="163"/>
    </location>
    <ligand>
        <name>S-adenosyl-L-methionine</name>
        <dbReference type="ChEBI" id="CHEBI:59789"/>
    </ligand>
</feature>
<feature type="binding site" evidence="1">
    <location>
        <position position="221"/>
    </location>
    <ligand>
        <name>S-adenosyl-L-methionine</name>
        <dbReference type="ChEBI" id="CHEBI:59789"/>
    </ligand>
</feature>
<feature type="binding site" evidence="1">
    <location>
        <position position="248"/>
    </location>
    <ligand>
        <name>S-adenosyl-L-methionine</name>
        <dbReference type="ChEBI" id="CHEBI:59789"/>
    </ligand>
</feature>
<organism>
    <name type="scientific">Neurospora crassa (strain ATCC 24698 / 74-OR23-1A / CBS 708.71 / DSM 1257 / FGSC 987)</name>
    <dbReference type="NCBI Taxonomy" id="367110"/>
    <lineage>
        <taxon>Eukaryota</taxon>
        <taxon>Fungi</taxon>
        <taxon>Dikarya</taxon>
        <taxon>Ascomycota</taxon>
        <taxon>Pezizomycotina</taxon>
        <taxon>Sordariomycetes</taxon>
        <taxon>Sordariomycetidae</taxon>
        <taxon>Sordariales</taxon>
        <taxon>Sordariaceae</taxon>
        <taxon>Neurospora</taxon>
    </lineage>
</organism>
<proteinExistence type="inferred from homology"/>
<protein>
    <recommendedName>
        <fullName>Diphthine methyl ester synthase</fullName>
        <ecNumber>2.1.1.314</ecNumber>
    </recommendedName>
    <alternativeName>
        <fullName>Diphthamide biosynthesis methyltransferase</fullName>
    </alternativeName>
</protein>